<protein>
    <recommendedName>
        <fullName>Serine/arginine-rich splicing factor 2</fullName>
    </recommendedName>
    <alternativeName>
        <fullName>Splicing component, 35 kDa</fullName>
    </alternativeName>
    <alternativeName>
        <fullName>Splicing factor SC35</fullName>
        <shortName>SC-35</shortName>
    </alternativeName>
    <alternativeName>
        <fullName>Splicing factor, arginine/serine-rich 2</fullName>
    </alternativeName>
</protein>
<organism>
    <name type="scientific">Rattus norvegicus</name>
    <name type="common">Rat</name>
    <dbReference type="NCBI Taxonomy" id="10116"/>
    <lineage>
        <taxon>Eukaryota</taxon>
        <taxon>Metazoa</taxon>
        <taxon>Chordata</taxon>
        <taxon>Craniata</taxon>
        <taxon>Vertebrata</taxon>
        <taxon>Euteleostomi</taxon>
        <taxon>Mammalia</taxon>
        <taxon>Eutheria</taxon>
        <taxon>Euarchontoglires</taxon>
        <taxon>Glires</taxon>
        <taxon>Rodentia</taxon>
        <taxon>Myomorpha</taxon>
        <taxon>Muroidea</taxon>
        <taxon>Muridae</taxon>
        <taxon>Murinae</taxon>
        <taxon>Rattus</taxon>
    </lineage>
</organism>
<feature type="initiator methionine" description="Removed" evidence="2">
    <location>
        <position position="1"/>
    </location>
</feature>
<feature type="chain" id="PRO_0000081921" description="Serine/arginine-rich splicing factor 2">
    <location>
        <begin position="2"/>
        <end position="221"/>
    </location>
</feature>
<feature type="domain" description="RRM" evidence="3">
    <location>
        <begin position="14"/>
        <end position="92"/>
    </location>
</feature>
<feature type="region of interest" description="Disordered" evidence="4">
    <location>
        <begin position="92"/>
        <end position="221"/>
    </location>
</feature>
<feature type="compositionally biased region" description="Basic residues" evidence="4">
    <location>
        <begin position="117"/>
        <end position="171"/>
    </location>
</feature>
<feature type="compositionally biased region" description="Basic residues" evidence="4">
    <location>
        <begin position="179"/>
        <end position="189"/>
    </location>
</feature>
<feature type="modified residue" description="N-acetylserine" evidence="2">
    <location>
        <position position="2"/>
    </location>
</feature>
<feature type="modified residue" description="Phosphoserine" evidence="7">
    <location>
        <position position="2"/>
    </location>
</feature>
<feature type="modified residue" description="Phosphothreonine" evidence="2">
    <location>
        <position position="22"/>
    </location>
</feature>
<feature type="modified residue" description="Phosphothreonine" evidence="2">
    <location>
        <position position="25"/>
    </location>
</feature>
<feature type="modified residue" description="Phosphoserine" evidence="7">
    <location>
        <position position="26"/>
    </location>
</feature>
<feature type="modified residue" description="N6-acetyllysine" evidence="2">
    <location>
        <position position="52"/>
    </location>
</feature>
<feature type="modified residue" description="Phosphoserine" evidence="7">
    <location>
        <position position="189"/>
    </location>
</feature>
<feature type="modified residue" description="Phosphoserine" evidence="7">
    <location>
        <position position="191"/>
    </location>
</feature>
<feature type="modified residue" description="Phosphoserine" evidence="2">
    <location>
        <position position="204"/>
    </location>
</feature>
<feature type="modified residue" description="Phosphoserine" evidence="7">
    <location>
        <position position="206"/>
    </location>
</feature>
<feature type="modified residue" description="Phosphoserine" evidence="7">
    <location>
        <position position="208"/>
    </location>
</feature>
<feature type="modified residue" description="Phosphoserine" evidence="7">
    <location>
        <position position="212"/>
    </location>
</feature>
<feature type="modified residue" description="Phosphoserine" evidence="2">
    <location>
        <position position="220"/>
    </location>
</feature>
<keyword id="KW-0007">Acetylation</keyword>
<keyword id="KW-0507">mRNA processing</keyword>
<keyword id="KW-0508">mRNA splicing</keyword>
<keyword id="KW-0539">Nucleus</keyword>
<keyword id="KW-0597">Phosphoprotein</keyword>
<keyword id="KW-1185">Reference proteome</keyword>
<keyword id="KW-0694">RNA-binding</keyword>
<proteinExistence type="evidence at protein level"/>
<accession>Q6PDU1</accession>
<comment type="function">
    <text evidence="1">Necessary for the splicing of pre-mRNA. It is required for formation of the earliest ATP-dependent splicing complex and interacts with spliceosomal components bound to both the 5'- and 3'-splice sites during spliceosome assembly. It also is required for ATP-dependent interactions of both U1 and U2 snRNPs with pre-mRNA. The phosphorylated form (by SRPK2) is required for cellular apoptosis in response to cisplatin treatment (By similarity).</text>
</comment>
<comment type="subunit">
    <text evidence="1 5">In vitro, self-associates and binds SRSF1/SFRS1 (ASF/SF2), SNRNP70 and U2AF1 but not U2AF2. Binds SREK1/SFRS12. Interacts with CCNL2. Interacts with SCAF11. Interacts with ZRSR2/U2AF1-RS2. Interacts with CCDC55 (via C-terminus). Interacts with BRDT (By similarity). Interacts with CCNL1.</text>
</comment>
<comment type="subcellular location">
    <subcellularLocation>
        <location evidence="1">Nucleus</location>
    </subcellularLocation>
</comment>
<comment type="PTM">
    <text evidence="1">Extensively phosphorylated on serine residues in the RS domain. Phosphorylated by SRPK2 and this controls cell fate decision in response to cisplatin treatment. SRSF2 and SRPK2 cooperate to induce apoptosis through regulation of the splicing switch of caspase-8 pre-mRNA and in the absence of SRPK2, cisplatin-treated cells accumulate in G2/M phase. KAT5/TIP60 inhibits its phosphorylation by preventing SRPK2 nuclear translocation (By similarity).</text>
</comment>
<comment type="PTM">
    <text evidence="1">Acetylation on Lys-52 by KAT5/TIP60 promotes its proteasomal degradation. This effect is counterbalanced by HDAC6, which positively controls SRSF2 protein level by deacetylating it and preventing its proteasomal degradation (By similarity).</text>
</comment>
<comment type="similarity">
    <text evidence="6">Belongs to the splicing factor SR family.</text>
</comment>
<evidence type="ECO:0000250" key="1"/>
<evidence type="ECO:0000250" key="2">
    <source>
        <dbReference type="UniProtKB" id="Q01130"/>
    </source>
</evidence>
<evidence type="ECO:0000255" key="3">
    <source>
        <dbReference type="PROSITE-ProRule" id="PRU00176"/>
    </source>
</evidence>
<evidence type="ECO:0000256" key="4">
    <source>
        <dbReference type="SAM" id="MobiDB-lite"/>
    </source>
</evidence>
<evidence type="ECO:0000269" key="5">
    <source>
    </source>
</evidence>
<evidence type="ECO:0000305" key="6"/>
<evidence type="ECO:0007744" key="7">
    <source>
    </source>
</evidence>
<name>SRSF2_RAT</name>
<sequence length="221" mass="25476">MSYGRPPPDVEGMTSLKVDNLTYRTSPDTLRRVFEKYGRVGDVYIPRDRYTKESRGFAFVRFHDKRDAEDAMDAMDGAVLDGRELRVQMARYGRPPDSHHSRRGPPPRRYGGGGYGRRSRSPRRRRRSRSRSRSRSRSRSRSRYSRSKSRSRTRSRSRSTSKSRSARRSKSKSSSVSRSRSRSRSRSRSRSPPPVSKRESKSRSRSKSPPKSPEEEGAVSS</sequence>
<gene>
    <name type="primary">Srsf2</name>
    <name type="synonym">Sfrs2</name>
</gene>
<dbReference type="EMBL" id="BC058508">
    <property type="protein sequence ID" value="AAH58508.1"/>
    <property type="molecule type" value="mRNA"/>
</dbReference>
<dbReference type="RefSeq" id="NP_001009720.1">
    <property type="nucleotide sequence ID" value="NM_001009720.2"/>
</dbReference>
<dbReference type="RefSeq" id="XP_006247875.1">
    <property type="nucleotide sequence ID" value="XM_006247813.5"/>
</dbReference>
<dbReference type="RefSeq" id="XP_008766604.1">
    <property type="nucleotide sequence ID" value="XM_008768382.3"/>
</dbReference>
<dbReference type="SMR" id="Q6PDU1"/>
<dbReference type="BioGRID" id="268944">
    <property type="interactions" value="2"/>
</dbReference>
<dbReference type="FunCoup" id="Q6PDU1">
    <property type="interactions" value="4400"/>
</dbReference>
<dbReference type="IntAct" id="Q6PDU1">
    <property type="interactions" value="4"/>
</dbReference>
<dbReference type="MINT" id="Q6PDU1"/>
<dbReference type="STRING" id="10116.ENSRNOP00000059012"/>
<dbReference type="iPTMnet" id="Q6PDU1"/>
<dbReference type="PhosphoSitePlus" id="Q6PDU1"/>
<dbReference type="jPOST" id="Q6PDU1"/>
<dbReference type="PaxDb" id="10116-ENSRNOP00000059012"/>
<dbReference type="Ensembl" id="ENSRNOT00000067739.3">
    <property type="protein sequence ID" value="ENSRNOP00000059012.1"/>
    <property type="gene ID" value="ENSRNOG00000000248.7"/>
</dbReference>
<dbReference type="GeneID" id="494445"/>
<dbReference type="KEGG" id="rno:494445"/>
<dbReference type="AGR" id="RGD:1359422"/>
<dbReference type="CTD" id="6427"/>
<dbReference type="RGD" id="1359422">
    <property type="gene designation" value="Srsf2"/>
</dbReference>
<dbReference type="eggNOG" id="KOG4207">
    <property type="taxonomic scope" value="Eukaryota"/>
</dbReference>
<dbReference type="GeneTree" id="ENSGT00940000154883"/>
<dbReference type="HOGENOM" id="CLU_012062_10_3_1"/>
<dbReference type="InParanoid" id="Q6PDU1"/>
<dbReference type="OMA" id="PLIRCDV"/>
<dbReference type="OrthoDB" id="8093034at2759"/>
<dbReference type="Reactome" id="R-RNO-159236">
    <property type="pathway name" value="Transport of Mature mRNA derived from an Intron-Containing Transcript"/>
</dbReference>
<dbReference type="Reactome" id="R-RNO-72163">
    <property type="pathway name" value="mRNA Splicing - Major Pathway"/>
</dbReference>
<dbReference type="Reactome" id="R-RNO-72165">
    <property type="pathway name" value="mRNA Splicing - Minor Pathway"/>
</dbReference>
<dbReference type="Reactome" id="R-RNO-72187">
    <property type="pathway name" value="mRNA 3'-end processing"/>
</dbReference>
<dbReference type="Reactome" id="R-RNO-72203">
    <property type="pathway name" value="Processing of Capped Intron-Containing Pre-mRNA"/>
</dbReference>
<dbReference type="Reactome" id="R-RNO-73856">
    <property type="pathway name" value="RNA Polymerase II Transcription Termination"/>
</dbReference>
<dbReference type="CD-CODE" id="8FEE509A">
    <property type="entry name" value="Nuclear speckle"/>
</dbReference>
<dbReference type="PRO" id="PR:Q6PDU1"/>
<dbReference type="Proteomes" id="UP000002494">
    <property type="component" value="Chromosome 10"/>
</dbReference>
<dbReference type="Bgee" id="ENSRNOG00000000248">
    <property type="expression patterns" value="Expressed in thymus and 20 other cell types or tissues"/>
</dbReference>
<dbReference type="GO" id="GO:0035061">
    <property type="term" value="C:interchromatin granule"/>
    <property type="evidence" value="ECO:0000314"/>
    <property type="project" value="RGD"/>
</dbReference>
<dbReference type="GO" id="GO:0016607">
    <property type="term" value="C:nuclear speck"/>
    <property type="evidence" value="ECO:0000314"/>
    <property type="project" value="RGD"/>
</dbReference>
<dbReference type="GO" id="GO:0005634">
    <property type="term" value="C:nucleus"/>
    <property type="evidence" value="ECO:0000266"/>
    <property type="project" value="RGD"/>
</dbReference>
<dbReference type="GO" id="GO:0005726">
    <property type="term" value="C:perichromatin fibrils"/>
    <property type="evidence" value="ECO:0000314"/>
    <property type="project" value="RGD"/>
</dbReference>
<dbReference type="GO" id="GO:0005681">
    <property type="term" value="C:spliceosomal complex"/>
    <property type="evidence" value="ECO:0000266"/>
    <property type="project" value="RGD"/>
</dbReference>
<dbReference type="GO" id="GO:0036002">
    <property type="term" value="F:pre-mRNA binding"/>
    <property type="evidence" value="ECO:0000266"/>
    <property type="project" value="RGD"/>
</dbReference>
<dbReference type="GO" id="GO:0005080">
    <property type="term" value="F:protein kinase C binding"/>
    <property type="evidence" value="ECO:0000353"/>
    <property type="project" value="RGD"/>
</dbReference>
<dbReference type="GO" id="GO:0003723">
    <property type="term" value="F:RNA binding"/>
    <property type="evidence" value="ECO:0000318"/>
    <property type="project" value="GO_Central"/>
</dbReference>
<dbReference type="GO" id="GO:0006397">
    <property type="term" value="P:mRNA processing"/>
    <property type="evidence" value="ECO:0007669"/>
    <property type="project" value="UniProtKB-KW"/>
</dbReference>
<dbReference type="GO" id="GO:0000381">
    <property type="term" value="P:regulation of alternative mRNA splicing, via spliceosome"/>
    <property type="evidence" value="ECO:0000266"/>
    <property type="project" value="RGD"/>
</dbReference>
<dbReference type="GO" id="GO:0033197">
    <property type="term" value="P:response to vitamin E"/>
    <property type="evidence" value="ECO:0000270"/>
    <property type="project" value="RGD"/>
</dbReference>
<dbReference type="GO" id="GO:0008380">
    <property type="term" value="P:RNA splicing"/>
    <property type="evidence" value="ECO:0007669"/>
    <property type="project" value="UniProtKB-KW"/>
</dbReference>
<dbReference type="CDD" id="cd12311">
    <property type="entry name" value="RRM_SRSF2_SRSF8"/>
    <property type="match status" value="1"/>
</dbReference>
<dbReference type="FunFam" id="3.30.70.330:FF:000308">
    <property type="entry name" value="Serine/arginine-rich splicing factor 2"/>
    <property type="match status" value="1"/>
</dbReference>
<dbReference type="Gene3D" id="3.30.70.330">
    <property type="match status" value="1"/>
</dbReference>
<dbReference type="InterPro" id="IPR012677">
    <property type="entry name" value="Nucleotide-bd_a/b_plait_sf"/>
</dbReference>
<dbReference type="InterPro" id="IPR035979">
    <property type="entry name" value="RBD_domain_sf"/>
</dbReference>
<dbReference type="InterPro" id="IPR051106">
    <property type="entry name" value="RNA-bind/splicing_reg"/>
</dbReference>
<dbReference type="InterPro" id="IPR000504">
    <property type="entry name" value="RRM_dom"/>
</dbReference>
<dbReference type="InterPro" id="IPR003954">
    <property type="entry name" value="RRM_dom_euk"/>
</dbReference>
<dbReference type="PANTHER" id="PTHR48028">
    <property type="entry name" value="GLYCINE-RICH RNA-BINDING PROTEIN RZ1A"/>
    <property type="match status" value="1"/>
</dbReference>
<dbReference type="PANTHER" id="PTHR48028:SF4">
    <property type="entry name" value="SC35-LIKE SPLICING FACTOR"/>
    <property type="match status" value="1"/>
</dbReference>
<dbReference type="Pfam" id="PF00076">
    <property type="entry name" value="RRM_1"/>
    <property type="match status" value="1"/>
</dbReference>
<dbReference type="SMART" id="SM00360">
    <property type="entry name" value="RRM"/>
    <property type="match status" value="1"/>
</dbReference>
<dbReference type="SMART" id="SM00361">
    <property type="entry name" value="RRM_1"/>
    <property type="match status" value="1"/>
</dbReference>
<dbReference type="SUPFAM" id="SSF54928">
    <property type="entry name" value="RNA-binding domain, RBD"/>
    <property type="match status" value="1"/>
</dbReference>
<dbReference type="PROSITE" id="PS50102">
    <property type="entry name" value="RRM"/>
    <property type="match status" value="1"/>
</dbReference>
<reference key="1">
    <citation type="journal article" date="2004" name="Genome Res.">
        <title>The status, quality, and expansion of the NIH full-length cDNA project: the Mammalian Gene Collection (MGC).</title>
        <authorList>
            <consortium name="The MGC Project Team"/>
        </authorList>
    </citation>
    <scope>NUCLEOTIDE SEQUENCE [LARGE SCALE MRNA]</scope>
    <source>
        <tissue>Pituitary</tissue>
    </source>
</reference>
<reference key="2">
    <citation type="journal article" date="2001" name="Neuron">
        <title>Dopamine and glutamate induce distinct striatal splice forms of Ania-6, an RNA polymerase II-associated cyclin.</title>
        <authorList>
            <person name="Berke J.D."/>
            <person name="Sgambato V."/>
            <person name="Zhu P.-P."/>
            <person name="Lavoie B."/>
            <person name="Vincent M."/>
            <person name="Krause M."/>
            <person name="Hyman S.E."/>
        </authorList>
    </citation>
    <scope>INTERACTION WITH CCNL1</scope>
</reference>
<reference key="3">
    <citation type="journal article" date="2012" name="Nat. Commun.">
        <title>Quantitative maps of protein phosphorylation sites across 14 different rat organs and tissues.</title>
        <authorList>
            <person name="Lundby A."/>
            <person name="Secher A."/>
            <person name="Lage K."/>
            <person name="Nordsborg N.B."/>
            <person name="Dmytriyev A."/>
            <person name="Lundby C."/>
            <person name="Olsen J.V."/>
        </authorList>
    </citation>
    <scope>PHOSPHORYLATION [LARGE SCALE ANALYSIS] AT SER-2; SER-26; SER-189; SER-191; SER-206; SER-208 AND SER-212</scope>
    <scope>IDENTIFICATION BY MASS SPECTROMETRY [LARGE SCALE ANALYSIS]</scope>
</reference>